<keyword id="KW-0678">Repressor</keyword>
<keyword id="KW-0346">Stress response</keyword>
<keyword id="KW-0804">Transcription</keyword>
<keyword id="KW-0805">Transcription regulation</keyword>
<dbReference type="EMBL" id="AM236080">
    <property type="protein sequence ID" value="CAK05872.1"/>
    <property type="molecule type" value="Genomic_DNA"/>
</dbReference>
<dbReference type="RefSeq" id="WP_011650182.1">
    <property type="nucleotide sequence ID" value="NC_008380.1"/>
</dbReference>
<dbReference type="SMR" id="Q1MMD0"/>
<dbReference type="EnsemblBacteria" id="CAK05872">
    <property type="protein sequence ID" value="CAK05872"/>
    <property type="gene ID" value="RL0381"/>
</dbReference>
<dbReference type="KEGG" id="rle:RL0381"/>
<dbReference type="eggNOG" id="COG1420">
    <property type="taxonomic scope" value="Bacteria"/>
</dbReference>
<dbReference type="HOGENOM" id="CLU_050019_0_0_5"/>
<dbReference type="Proteomes" id="UP000006575">
    <property type="component" value="Chromosome"/>
</dbReference>
<dbReference type="GO" id="GO:0003677">
    <property type="term" value="F:DNA binding"/>
    <property type="evidence" value="ECO:0007669"/>
    <property type="project" value="InterPro"/>
</dbReference>
<dbReference type="GO" id="GO:0045892">
    <property type="term" value="P:negative regulation of DNA-templated transcription"/>
    <property type="evidence" value="ECO:0007669"/>
    <property type="project" value="UniProtKB-UniRule"/>
</dbReference>
<dbReference type="Gene3D" id="3.30.450.40">
    <property type="match status" value="1"/>
</dbReference>
<dbReference type="Gene3D" id="3.30.390.60">
    <property type="entry name" value="Heat-inducible transcription repressor hrca homolog, domain 3"/>
    <property type="match status" value="1"/>
</dbReference>
<dbReference type="Gene3D" id="1.10.10.10">
    <property type="entry name" value="Winged helix-like DNA-binding domain superfamily/Winged helix DNA-binding domain"/>
    <property type="match status" value="1"/>
</dbReference>
<dbReference type="HAMAP" id="MF_00081">
    <property type="entry name" value="HrcA"/>
    <property type="match status" value="1"/>
</dbReference>
<dbReference type="InterPro" id="IPR029016">
    <property type="entry name" value="GAF-like_dom_sf"/>
</dbReference>
<dbReference type="InterPro" id="IPR002571">
    <property type="entry name" value="HrcA"/>
</dbReference>
<dbReference type="InterPro" id="IPR021153">
    <property type="entry name" value="HrcA_C"/>
</dbReference>
<dbReference type="InterPro" id="IPR036388">
    <property type="entry name" value="WH-like_DNA-bd_sf"/>
</dbReference>
<dbReference type="InterPro" id="IPR036390">
    <property type="entry name" value="WH_DNA-bd_sf"/>
</dbReference>
<dbReference type="InterPro" id="IPR023120">
    <property type="entry name" value="WHTH_transcript_rep_HrcA_IDD"/>
</dbReference>
<dbReference type="NCBIfam" id="TIGR00331">
    <property type="entry name" value="hrcA"/>
    <property type="match status" value="1"/>
</dbReference>
<dbReference type="PANTHER" id="PTHR34824">
    <property type="entry name" value="HEAT-INDUCIBLE TRANSCRIPTION REPRESSOR HRCA"/>
    <property type="match status" value="1"/>
</dbReference>
<dbReference type="PANTHER" id="PTHR34824:SF1">
    <property type="entry name" value="HEAT-INDUCIBLE TRANSCRIPTION REPRESSOR HRCA"/>
    <property type="match status" value="1"/>
</dbReference>
<dbReference type="Pfam" id="PF01628">
    <property type="entry name" value="HrcA"/>
    <property type="match status" value="1"/>
</dbReference>
<dbReference type="PIRSF" id="PIRSF005485">
    <property type="entry name" value="HrcA"/>
    <property type="match status" value="1"/>
</dbReference>
<dbReference type="SUPFAM" id="SSF55781">
    <property type="entry name" value="GAF domain-like"/>
    <property type="match status" value="1"/>
</dbReference>
<dbReference type="SUPFAM" id="SSF46785">
    <property type="entry name" value="Winged helix' DNA-binding domain"/>
    <property type="match status" value="1"/>
</dbReference>
<proteinExistence type="inferred from homology"/>
<feature type="chain" id="PRO_1000010442" description="Heat-inducible transcription repressor HrcA">
    <location>
        <begin position="1"/>
        <end position="362"/>
    </location>
</feature>
<organism>
    <name type="scientific">Rhizobium johnstonii (strain DSM 114642 / LMG 32736 / 3841)</name>
    <name type="common">Rhizobium leguminosarum bv. viciae</name>
    <dbReference type="NCBI Taxonomy" id="216596"/>
    <lineage>
        <taxon>Bacteria</taxon>
        <taxon>Pseudomonadati</taxon>
        <taxon>Pseudomonadota</taxon>
        <taxon>Alphaproteobacteria</taxon>
        <taxon>Hyphomicrobiales</taxon>
        <taxon>Rhizobiaceae</taxon>
        <taxon>Rhizobium/Agrobacterium group</taxon>
        <taxon>Rhizobium</taxon>
        <taxon>Rhizobium johnstonii</taxon>
    </lineage>
</organism>
<accession>Q1MMD0</accession>
<name>HRCA_RHIJ3</name>
<gene>
    <name evidence="1" type="primary">hrcA</name>
    <name type="ordered locus">RL0381</name>
</gene>
<reference key="1">
    <citation type="journal article" date="2006" name="Genome Biol.">
        <title>The genome of Rhizobium leguminosarum has recognizable core and accessory components.</title>
        <authorList>
            <person name="Young J.P.W."/>
            <person name="Crossman L.C."/>
            <person name="Johnston A.W.B."/>
            <person name="Thomson N.R."/>
            <person name="Ghazoui Z.F."/>
            <person name="Hull K.H."/>
            <person name="Wexler M."/>
            <person name="Curson A.R.J."/>
            <person name="Todd J.D."/>
            <person name="Poole P.S."/>
            <person name="Mauchline T.H."/>
            <person name="East A.K."/>
            <person name="Quail M.A."/>
            <person name="Churcher C."/>
            <person name="Arrowsmith C."/>
            <person name="Cherevach I."/>
            <person name="Chillingworth T."/>
            <person name="Clarke K."/>
            <person name="Cronin A."/>
            <person name="Davis P."/>
            <person name="Fraser A."/>
            <person name="Hance Z."/>
            <person name="Hauser H."/>
            <person name="Jagels K."/>
            <person name="Moule S."/>
            <person name="Mungall K."/>
            <person name="Norbertczak H."/>
            <person name="Rabbinowitsch E."/>
            <person name="Sanders M."/>
            <person name="Simmonds M."/>
            <person name="Whitehead S."/>
            <person name="Parkhill J."/>
        </authorList>
    </citation>
    <scope>NUCLEOTIDE SEQUENCE [LARGE SCALE GENOMIC DNA]</scope>
    <source>
        <strain>DSM 114642 / LMG 32736 / 3841</strain>
    </source>
</reference>
<comment type="function">
    <text evidence="1">Negative regulator of class I heat shock genes (grpE-dnaK-dnaJ and groELS operons). Prevents heat-shock induction of these operons.</text>
</comment>
<comment type="similarity">
    <text evidence="1">Belongs to the HrcA family.</text>
</comment>
<protein>
    <recommendedName>
        <fullName evidence="1">Heat-inducible transcription repressor HrcA</fullName>
    </recommendedName>
</protein>
<sequence length="362" mass="39553">MGIRSTSVSDAVAALDERSREIFRRIVEGYLESGEPLGSRNLSRILPMSLSPASVRNVMSDLEELGLIYSPHVSAGRLPTQIGLRFFVDAFMQVGDLSAEERASIDRQVRVESGGNPVESMMNEASRMLSGISRGAGLVITSKSDPVLKHVEFIRLEPTKALAVLVGDHDQVENRIIELPAGVTSSQLTEAANFLNAHMSGQTLPELRKQLSRLKDDVRHELDALSRDLVERGIAVWAGSPDEGKPTQLIIRGRANLLEGLAGAEDLDRLRLLFDDLEKKDSLIEILNLAESGSGVRIFIGSENKLFSLSGSSLIVAPYRDDDDRIVGAVGVIGPTRLNYSRIVPMVDYTAQLVSRLSRSQL</sequence>
<evidence type="ECO:0000255" key="1">
    <source>
        <dbReference type="HAMAP-Rule" id="MF_00081"/>
    </source>
</evidence>